<evidence type="ECO:0000250" key="1">
    <source>
        <dbReference type="UniProtKB" id="P20839"/>
    </source>
</evidence>
<evidence type="ECO:0000250" key="2">
    <source>
        <dbReference type="UniProtKB" id="P50097"/>
    </source>
</evidence>
<evidence type="ECO:0000250" key="3">
    <source>
        <dbReference type="UniProtKB" id="P9WKI7"/>
    </source>
</evidence>
<evidence type="ECO:0000256" key="4">
    <source>
        <dbReference type="SAM" id="MobiDB-lite"/>
    </source>
</evidence>
<evidence type="ECO:0000269" key="5">
    <source>
    </source>
</evidence>
<evidence type="ECO:0000269" key="6">
    <source>
    </source>
</evidence>
<evidence type="ECO:0000303" key="7">
    <source>
    </source>
</evidence>
<evidence type="ECO:0000305" key="8"/>
<evidence type="ECO:0000305" key="9">
    <source>
    </source>
</evidence>
<evidence type="ECO:0007829" key="10">
    <source>
        <dbReference type="PDB" id="4IXH"/>
    </source>
</evidence>
<evidence type="ECO:0007829" key="11">
    <source>
        <dbReference type="PDB" id="4QJ1"/>
    </source>
</evidence>
<evidence type="ECO:0007829" key="12">
    <source>
        <dbReference type="PDB" id="4RV8"/>
    </source>
</evidence>
<organism>
    <name type="scientific">Cryptosporidium parvum</name>
    <dbReference type="NCBI Taxonomy" id="5807"/>
    <lineage>
        <taxon>Eukaryota</taxon>
        <taxon>Sar</taxon>
        <taxon>Alveolata</taxon>
        <taxon>Apicomplexa</taxon>
        <taxon>Conoidasida</taxon>
        <taxon>Coccidia</taxon>
        <taxon>Eucoccidiorida</taxon>
        <taxon>Eimeriorina</taxon>
        <taxon>Cryptosporidiidae</taxon>
        <taxon>Cryptosporidium</taxon>
    </lineage>
</organism>
<accession>Q8T6T2</accession>
<gene>
    <name type="ORF">56k.02</name>
    <name type="ORF">cgd6_20</name>
</gene>
<comment type="function">
    <text evidence="5">Catalyzes the conversion of inosine 5'-phosphate (IMP) to xanthosine 5'-phosphate (XMP), the first committed and rate-limiting step in the de novo synthesis of guanine nucleotides, and therefore plays an important role in the regulation of cell growth.</text>
</comment>
<comment type="catalytic activity">
    <reaction evidence="5">
        <text>IMP + NAD(+) + H2O = XMP + NADH + H(+)</text>
        <dbReference type="Rhea" id="RHEA:11708"/>
        <dbReference type="ChEBI" id="CHEBI:15377"/>
        <dbReference type="ChEBI" id="CHEBI:15378"/>
        <dbReference type="ChEBI" id="CHEBI:57464"/>
        <dbReference type="ChEBI" id="CHEBI:57540"/>
        <dbReference type="ChEBI" id="CHEBI:57945"/>
        <dbReference type="ChEBI" id="CHEBI:58053"/>
        <dbReference type="EC" id="1.1.1.205"/>
    </reaction>
</comment>
<comment type="cofactor">
    <cofactor evidence="1">
        <name>K(+)</name>
        <dbReference type="ChEBI" id="CHEBI:29103"/>
    </cofactor>
</comment>
<comment type="activity regulation">
    <text evidence="1 5">Mycophenolic acid (MPA) is a non-competitive inhibitor that prevents formation of the closed enzyme conformation by binding to the same site as the amobile flap. In contrast, mizoribine monophosphate (MZP) is a competitive inhibitor that induces the closed conformation. MPA is a potent inhibitor of mammalian IMPDHs but a poor inhibitor of the bacterial enzymes. MZP is a more potent inhibitor of bacterial IMPDH. Resistant to mycophenolic acid (MPA) inhibition (PubMed:15269207).</text>
</comment>
<comment type="biophysicochemical properties">
    <kinetics>
        <KM evidence="5">29 uM for Inosine 5'-phosphate</KM>
        <KM evidence="5">150 uM for NAD(+)</KM>
    </kinetics>
</comment>
<comment type="pathway">
    <text evidence="9">Purine metabolism; XMP biosynthesis via de novo pathway; XMP from IMP: step 1/1.</text>
</comment>
<comment type="subunit">
    <text evidence="5">Homotetramer.</text>
</comment>
<comment type="subcellular location">
    <subcellularLocation>
        <location evidence="1">Cytoplasm</location>
    </subcellularLocation>
</comment>
<comment type="mass spectrometry"/>
<comment type="miscellaneous">
    <text evidence="9">Cryptosporidium IMPDH was acquired through lateral transfer from eubacteria, and predictably the sensitivity to MPA differs from that of mammalian IMPDH forms. This divergence of parasite and host enzymes is exploited to design more potent parasite-specific inhibitors.</text>
</comment>
<comment type="similarity">
    <text evidence="8">Belongs to the IMPDH/GMPR family.</text>
</comment>
<keyword id="KW-0002">3D-structure</keyword>
<keyword id="KW-0963">Cytoplasm</keyword>
<keyword id="KW-0903">Direct protein sequencing</keyword>
<keyword id="KW-0332">GMP biosynthesis</keyword>
<keyword id="KW-0479">Metal-binding</keyword>
<keyword id="KW-0520">NAD</keyword>
<keyword id="KW-0560">Oxidoreductase</keyword>
<keyword id="KW-0630">Potassium</keyword>
<keyword id="KW-0658">Purine biosynthesis</keyword>
<feature type="chain" id="PRO_0000415682" description="Inosine-5'-monophosphate dehydrogenase">
    <location>
        <begin position="1"/>
        <end position="400"/>
    </location>
</feature>
<feature type="region of interest" description="Disordered" evidence="4">
    <location>
        <begin position="96"/>
        <end position="125"/>
    </location>
</feature>
<feature type="compositionally biased region" description="Basic and acidic residues" evidence="4">
    <location>
        <begin position="96"/>
        <end position="116"/>
    </location>
</feature>
<feature type="active site" description="Thioimidate intermediate" evidence="2">
    <location>
        <position position="219"/>
    </location>
</feature>
<feature type="active site" description="Proton acceptor" evidence="3">
    <location>
        <position position="315"/>
    </location>
</feature>
<feature type="binding site" evidence="2">
    <location>
        <position position="163"/>
    </location>
    <ligand>
        <name>NAD(+)</name>
        <dbReference type="ChEBI" id="CHEBI:57540"/>
    </ligand>
</feature>
<feature type="binding site" evidence="2">
    <location>
        <begin position="212"/>
        <end position="214"/>
    </location>
    <ligand>
        <name>NAD(+)</name>
        <dbReference type="ChEBI" id="CHEBI:57540"/>
    </ligand>
</feature>
<feature type="binding site" description="in other chain" evidence="2">
    <location>
        <position position="214"/>
    </location>
    <ligand>
        <name>K(+)</name>
        <dbReference type="ChEBI" id="CHEBI:29103"/>
        <note>ligand shared between two tetrameric partners</note>
    </ligand>
</feature>
<feature type="binding site" description="in other chain" evidence="2">
    <location>
        <position position="216"/>
    </location>
    <ligand>
        <name>K(+)</name>
        <dbReference type="ChEBI" id="CHEBI:29103"/>
        <note>ligand shared between two tetrameric partners</note>
    </ligand>
</feature>
<feature type="binding site" evidence="6">
    <location>
        <position position="217"/>
    </location>
    <ligand>
        <name>IMP</name>
        <dbReference type="ChEBI" id="CHEBI:58053"/>
    </ligand>
</feature>
<feature type="binding site" description="in other chain" evidence="2">
    <location>
        <position position="219"/>
    </location>
    <ligand>
        <name>K(+)</name>
        <dbReference type="ChEBI" id="CHEBI:29103"/>
        <note>ligand shared between two tetrameric partners</note>
    </ligand>
</feature>
<feature type="binding site" evidence="6">
    <location>
        <begin position="252"/>
        <end position="254"/>
    </location>
    <ligand>
        <name>IMP</name>
        <dbReference type="ChEBI" id="CHEBI:58053"/>
    </ligand>
</feature>
<feature type="binding site" evidence="6">
    <location>
        <begin position="275"/>
        <end position="276"/>
    </location>
    <ligand>
        <name>IMP</name>
        <dbReference type="ChEBI" id="CHEBI:58053"/>
    </ligand>
</feature>
<feature type="binding site" evidence="6">
    <location>
        <begin position="299"/>
        <end position="303"/>
    </location>
    <ligand>
        <name>IMP</name>
        <dbReference type="ChEBI" id="CHEBI:58053"/>
    </ligand>
</feature>
<feature type="binding site" evidence="6">
    <location>
        <position position="329"/>
    </location>
    <ligand>
        <name>IMP</name>
        <dbReference type="ChEBI" id="CHEBI:58053"/>
    </ligand>
</feature>
<feature type="binding site" evidence="2">
    <location>
        <position position="383"/>
    </location>
    <ligand>
        <name>K(+)</name>
        <dbReference type="ChEBI" id="CHEBI:29103"/>
        <note>ligand shared between two tetrameric partners</note>
    </ligand>
</feature>
<feature type="binding site" evidence="2">
    <location>
        <position position="384"/>
    </location>
    <ligand>
        <name>K(+)</name>
        <dbReference type="ChEBI" id="CHEBI:29103"/>
        <note>ligand shared between two tetrameric partners</note>
    </ligand>
</feature>
<feature type="binding site" evidence="2">
    <location>
        <position position="385"/>
    </location>
    <ligand>
        <name>K(+)</name>
        <dbReference type="ChEBI" id="CHEBI:29103"/>
        <note>ligand shared between two tetrameric partners</note>
    </ligand>
</feature>
<feature type="strand" evidence="12">
    <location>
        <begin position="5"/>
        <end position="8"/>
    </location>
</feature>
<feature type="helix" evidence="12">
    <location>
        <begin position="12"/>
        <end position="14"/>
    </location>
</feature>
<feature type="strand" evidence="12">
    <location>
        <begin position="15"/>
        <end position="17"/>
    </location>
</feature>
<feature type="helix" evidence="12">
    <location>
        <begin position="26"/>
        <end position="28"/>
    </location>
</feature>
<feature type="strand" evidence="12">
    <location>
        <begin position="33"/>
        <end position="36"/>
    </location>
</feature>
<feature type="strand" evidence="12">
    <location>
        <begin position="39"/>
        <end position="47"/>
    </location>
</feature>
<feature type="turn" evidence="12">
    <location>
        <begin position="51"/>
        <end position="53"/>
    </location>
</feature>
<feature type="helix" evidence="12">
    <location>
        <begin position="56"/>
        <end position="64"/>
    </location>
</feature>
<feature type="strand" evidence="12">
    <location>
        <begin position="68"/>
        <end position="71"/>
    </location>
</feature>
<feature type="strand" evidence="10">
    <location>
        <begin position="73"/>
        <end position="75"/>
    </location>
</feature>
<feature type="helix" evidence="12">
    <location>
        <begin position="77"/>
        <end position="88"/>
    </location>
</feature>
<feature type="turn" evidence="11">
    <location>
        <begin position="132"/>
        <end position="134"/>
    </location>
</feature>
<feature type="strand" evidence="12">
    <location>
        <begin position="138"/>
        <end position="141"/>
    </location>
</feature>
<feature type="helix" evidence="12">
    <location>
        <begin position="146"/>
        <end position="155"/>
    </location>
</feature>
<feature type="strand" evidence="12">
    <location>
        <begin position="158"/>
        <end position="163"/>
    </location>
</feature>
<feature type="strand" evidence="11">
    <location>
        <begin position="167"/>
        <end position="169"/>
    </location>
</feature>
<feature type="helix" evidence="12">
    <location>
        <begin position="170"/>
        <end position="182"/>
    </location>
</feature>
<feature type="strand" evidence="12">
    <location>
        <begin position="186"/>
        <end position="192"/>
    </location>
</feature>
<feature type="helix" evidence="12">
    <location>
        <begin position="195"/>
        <end position="203"/>
    </location>
</feature>
<feature type="strand" evidence="12">
    <location>
        <begin position="207"/>
        <end position="211"/>
    </location>
</feature>
<feature type="helix" evidence="12">
    <location>
        <begin position="221"/>
        <end position="224"/>
    </location>
</feature>
<feature type="helix" evidence="12">
    <location>
        <begin position="231"/>
        <end position="242"/>
    </location>
</feature>
<feature type="helix" evidence="12">
    <location>
        <begin position="243"/>
        <end position="245"/>
    </location>
</feature>
<feature type="strand" evidence="12">
    <location>
        <begin position="249"/>
        <end position="253"/>
    </location>
</feature>
<feature type="helix" evidence="12">
    <location>
        <begin position="258"/>
        <end position="266"/>
    </location>
</feature>
<feature type="strand" evidence="12">
    <location>
        <begin position="270"/>
        <end position="274"/>
    </location>
</feature>
<feature type="helix" evidence="12">
    <location>
        <begin position="276"/>
        <end position="279"/>
    </location>
</feature>
<feature type="strand" evidence="11">
    <location>
        <begin position="281"/>
        <end position="284"/>
    </location>
</feature>
<feature type="strand" evidence="12">
    <location>
        <begin position="288"/>
        <end position="291"/>
    </location>
</feature>
<feature type="strand" evidence="12">
    <location>
        <begin position="294"/>
        <end position="300"/>
    </location>
</feature>
<feature type="helix" evidence="12">
    <location>
        <begin position="305"/>
        <end position="309"/>
    </location>
</feature>
<feature type="strand" evidence="12">
    <location>
        <begin position="332"/>
        <end position="336"/>
    </location>
</feature>
<feature type="helix" evidence="12">
    <location>
        <begin position="341"/>
        <end position="358"/>
    </location>
</feature>
<feature type="helix" evidence="12">
    <location>
        <begin position="364"/>
        <end position="370"/>
    </location>
</feature>
<feature type="strand" evidence="12">
    <location>
        <begin position="373"/>
        <end position="375"/>
    </location>
</feature>
<feature type="helix" evidence="10">
    <location>
        <begin position="378"/>
        <end position="384"/>
    </location>
</feature>
<feature type="strand" evidence="10">
    <location>
        <begin position="388"/>
        <end position="391"/>
    </location>
</feature>
<sequence>MGTKNIGKGLTFEDILLVPNYSEVLPREVSLETKLTKNVSLKIPLISSAMDTVTEHLMAVGMARLGGIGIIHKNMDMESQVNEVLKVKNWISNLEKNESTPDQNLDKESTDGKDTKSNNNIDAYSNENLDNKGRLRVGAAIGVNEIERAKLLVEAGVDVIVLDSAHGHSLNIIRTLKEIKSKMNIDVIVGNVVTEEATKELIENGADGIKVGIGPGSICTTRIVAGVGVPQITAIEKCSSVASKFGIPIIADGGIRYSGDIGKALAVGASSVMIGSILAGTEESPGEKELIGDTVYKYYRGMGSVGAMKSGSGDRYFQEKRPENKMVPEGIEGRVKYKGEMEGVVYQLVGGLRSCMGYLGSASIEELWKKSSYVEITTSGLRESHVHDVEIVKEVMNYSK</sequence>
<proteinExistence type="evidence at protein level"/>
<dbReference type="EC" id="1.1.1.205" evidence="5"/>
<dbReference type="EMBL" id="AF426177">
    <property type="protein sequence ID" value="AAL83208.1"/>
    <property type="molecule type" value="Genomic_DNA"/>
</dbReference>
<dbReference type="EMBL" id="BX538350">
    <property type="protein sequence ID" value="CAD98604.1"/>
    <property type="molecule type" value="Genomic_DNA"/>
</dbReference>
<dbReference type="EMBL" id="FX115298">
    <property type="protein sequence ID" value="BAJ77401.1"/>
    <property type="molecule type" value="mRNA"/>
</dbReference>
<dbReference type="EMBL" id="FX115945">
    <property type="protein sequence ID" value="BAJ78048.1"/>
    <property type="molecule type" value="mRNA"/>
</dbReference>
<dbReference type="PDB" id="3FFS">
    <property type="method" value="X-ray"/>
    <property type="resolution" value="3.19 A"/>
    <property type="chains" value="A/B/C/D=1-400"/>
</dbReference>
<dbReference type="PDB" id="4IXH">
    <property type="method" value="X-ray"/>
    <property type="resolution" value="2.10 A"/>
    <property type="chains" value="A/B/C/D=1-89, A/B/C/D=135-400"/>
</dbReference>
<dbReference type="PDB" id="4QJ1">
    <property type="method" value="X-ray"/>
    <property type="resolution" value="2.42 A"/>
    <property type="chains" value="A/B/C/D=1-400"/>
</dbReference>
<dbReference type="PDB" id="4RV8">
    <property type="method" value="X-ray"/>
    <property type="resolution" value="2.05 A"/>
    <property type="chains" value="A/B/C/D=1-89, A/B/C/D=135-400"/>
</dbReference>
<dbReference type="PDBsum" id="3FFS"/>
<dbReference type="PDBsum" id="4IXH"/>
<dbReference type="PDBsum" id="4QJ1"/>
<dbReference type="PDBsum" id="4RV8"/>
<dbReference type="SMR" id="Q8T6T2"/>
<dbReference type="BindingDB" id="Q8T6T2"/>
<dbReference type="ChEMBL" id="CHEMBL6145"/>
<dbReference type="VEuPathDB" id="CryptoDB:cgd6_20"/>
<dbReference type="VEuPathDB" id="CryptoDB:CPATCC_0011500"/>
<dbReference type="BRENDA" id="1.1.1.205">
    <property type="organism ID" value="1728"/>
</dbReference>
<dbReference type="SABIO-RK" id="Q8T6T2"/>
<dbReference type="UniPathway" id="UPA00601">
    <property type="reaction ID" value="UER00295"/>
</dbReference>
<dbReference type="EvolutionaryTrace" id="Q8T6T2"/>
<dbReference type="Proteomes" id="UP000242991">
    <property type="component" value="Chromosome 6"/>
</dbReference>
<dbReference type="GO" id="GO:0005737">
    <property type="term" value="C:cytoplasm"/>
    <property type="evidence" value="ECO:0007669"/>
    <property type="project" value="UniProtKB-SubCell"/>
</dbReference>
<dbReference type="GO" id="GO:0003938">
    <property type="term" value="F:IMP dehydrogenase activity"/>
    <property type="evidence" value="ECO:0007669"/>
    <property type="project" value="UniProtKB-EC"/>
</dbReference>
<dbReference type="GO" id="GO:0046872">
    <property type="term" value="F:metal ion binding"/>
    <property type="evidence" value="ECO:0007669"/>
    <property type="project" value="UniProtKB-KW"/>
</dbReference>
<dbReference type="GO" id="GO:0006177">
    <property type="term" value="P:GMP biosynthetic process"/>
    <property type="evidence" value="ECO:0007669"/>
    <property type="project" value="UniProtKB-KW"/>
</dbReference>
<dbReference type="GO" id="GO:0006183">
    <property type="term" value="P:GTP biosynthetic process"/>
    <property type="evidence" value="ECO:0007669"/>
    <property type="project" value="TreeGrafter"/>
</dbReference>
<dbReference type="CDD" id="cd00381">
    <property type="entry name" value="IMPDH"/>
    <property type="match status" value="1"/>
</dbReference>
<dbReference type="FunFam" id="3.20.20.70:FF:000424">
    <property type="entry name" value="Inosine-5'-monophosphate dehydrogenase 2"/>
    <property type="match status" value="1"/>
</dbReference>
<dbReference type="Gene3D" id="3.20.20.70">
    <property type="entry name" value="Aldolase class I"/>
    <property type="match status" value="2"/>
</dbReference>
<dbReference type="InterPro" id="IPR013785">
    <property type="entry name" value="Aldolase_TIM"/>
</dbReference>
<dbReference type="InterPro" id="IPR005990">
    <property type="entry name" value="IMP_DH"/>
</dbReference>
<dbReference type="InterPro" id="IPR015875">
    <property type="entry name" value="IMP_DH/GMP_Rdtase_CS"/>
</dbReference>
<dbReference type="InterPro" id="IPR001093">
    <property type="entry name" value="IMP_DH_GMPRt"/>
</dbReference>
<dbReference type="PANTHER" id="PTHR11911:SF111">
    <property type="entry name" value="INOSINE-5'-MONOPHOSPHATE DEHYDROGENASE"/>
    <property type="match status" value="1"/>
</dbReference>
<dbReference type="PANTHER" id="PTHR11911">
    <property type="entry name" value="INOSINE-5-MONOPHOSPHATE DEHYDROGENASE RELATED"/>
    <property type="match status" value="1"/>
</dbReference>
<dbReference type="Pfam" id="PF00478">
    <property type="entry name" value="IMPDH"/>
    <property type="match status" value="1"/>
</dbReference>
<dbReference type="PIRSF" id="PIRSF000130">
    <property type="entry name" value="IMPDH"/>
    <property type="match status" value="1"/>
</dbReference>
<dbReference type="SMART" id="SM01240">
    <property type="entry name" value="IMPDH"/>
    <property type="match status" value="1"/>
</dbReference>
<dbReference type="SUPFAM" id="SSF51412">
    <property type="entry name" value="Inosine monophosphate dehydrogenase (IMPDH)"/>
    <property type="match status" value="1"/>
</dbReference>
<dbReference type="PROSITE" id="PS00487">
    <property type="entry name" value="IMP_DH_GMP_RED"/>
    <property type="match status" value="1"/>
</dbReference>
<reference key="1">
    <citation type="journal article" date="2002" name="Proc. Natl. Acad. Sci. U.S.A.">
        <title>Genetic complementation in apicomplexan parasites.</title>
        <authorList>
            <person name="Striepen B."/>
            <person name="White M.W."/>
            <person name="Li C."/>
            <person name="Guerini M.N."/>
            <person name="Malik S.B."/>
            <person name="Logsdon J.M. Jr."/>
            <person name="Liu C."/>
            <person name="Abrahamsen M.S."/>
        </authorList>
    </citation>
    <scope>NUCLEOTIDE SEQUENCE [GENOMIC DNA]</scope>
    <source>
        <strain>Iowa</strain>
    </source>
</reference>
<reference key="2">
    <citation type="journal article" date="2003" name="Genome Res.">
        <title>Integrated mapping, chromosomal sequencing and sequence analysis of Cryptosporidium parvum.</title>
        <authorList>
            <person name="Bankier A.T."/>
            <person name="Spriggs H.F."/>
            <person name="Fartmann B."/>
            <person name="Konfortov B.A."/>
            <person name="Madera M."/>
            <person name="Vogel C."/>
            <person name="Teichmann S.A."/>
            <person name="Ivens A."/>
            <person name="Dear P.H."/>
        </authorList>
    </citation>
    <scope>NUCLEOTIDE SEQUENCE [LARGE SCALE GENOMIC DNA]</scope>
    <source>
        <strain>Iowa</strain>
    </source>
</reference>
<reference key="3">
    <citation type="submission" date="2011-02" db="EMBL/GenBank/DDBJ databases">
        <title>Construction and analysis of full-length cDNA library of Cryptosporidium parvum.</title>
        <authorList>
            <person name="Yamagishi J."/>
            <person name="Wakaguri H."/>
            <person name="Sugano S."/>
            <person name="Kawano S."/>
            <person name="Fujisaki K."/>
            <person name="Sugimoto C."/>
            <person name="Watanabe J."/>
            <person name="Suzuki Y."/>
            <person name="Kimata I."/>
            <person name="Xuan X."/>
        </authorList>
    </citation>
    <scope>NUCLEOTIDE SEQUENCE [LARGE SCALE MRNA]</scope>
    <source>
        <strain>HNJ-1</strain>
    </source>
</reference>
<reference key="4">
    <citation type="journal article" date="2004" name="J. Biol. Chem.">
        <title>Cryptosporidium parvum IMP dehydrogenase: identification of functional, structural, and dynamic properties that can be exploited for drug design.</title>
        <authorList>
            <person name="Umejiego N.N."/>
            <person name="Li C."/>
            <person name="Riera T."/>
            <person name="Hedstrom L."/>
            <person name="Striepen B."/>
        </authorList>
    </citation>
    <scope>PROTEIN SEQUENCE OF 2-11</scope>
    <scope>FUNCTION</scope>
    <scope>CATALYTIC ACTIVITY</scope>
    <scope>BIOPHYSICOCHEMICAL PROPERTIES</scope>
    <scope>SUBUNIT</scope>
    <scope>ACTIVITY REGULATION</scope>
    <scope>MASS SPECTROMETRY</scope>
</reference>
<reference key="5">
    <citation type="journal article" date="2010" name="J. Am. Chem. Soc.">
        <title>The structural basis of Cryptosporidium-specific IMP dehydrogenase inhibitor selectivity.</title>
        <authorList>
            <person name="Macpherson I.S."/>
            <person name="Kirubakaran S."/>
            <person name="Gorla S.K."/>
            <person name="Riera T.V."/>
            <person name="D'Aquino J.A."/>
            <person name="Zhang M."/>
            <person name="Cuny G.D."/>
            <person name="Hedstrom L."/>
        </authorList>
    </citation>
    <scope>X-RAY CRYSTALLOGRAPHY (3.19 ANGSTROMS)</scope>
</reference>
<reference key="6">
    <citation type="journal article" date="2013" name="J. Med. Chem.">
        <title>Optimization of benzoxazole-based inhibitors of Cryptosporidium parvum inosine 5'-monophosphate dehydrogenase.</title>
        <authorList>
            <person name="Gorla S.K."/>
            <person name="Kavitha M."/>
            <person name="Zhang M."/>
            <person name="Chin J.E."/>
            <person name="Liu X."/>
            <person name="Striepen B."/>
            <person name="Makowska-Grzyska M."/>
            <person name="Kim Y."/>
            <person name="Joachimiak A."/>
            <person name="Hedstrom L."/>
            <person name="Cuny G.D."/>
        </authorList>
    </citation>
    <scope>X-RAY CRYSTALLOGRAPHY (2.10 ANGSTROMS) OF 1-89 OF 135-400 IN COMPLEX WITH IMP</scope>
</reference>
<protein>
    <recommendedName>
        <fullName evidence="7">Inosine-5'-monophosphate dehydrogenase</fullName>
        <shortName evidence="7">IMP dehydrogenase</shortName>
        <shortName>IMPD</shortName>
        <shortName evidence="7">IMPDH</shortName>
        <ecNumber evidence="5">1.1.1.205</ecNumber>
    </recommendedName>
</protein>
<name>IMDH_CRYPV</name>